<feature type="chain" id="PRO_0000372740" description="UPF0741 protein BT9727_5064">
    <location>
        <begin position="1"/>
        <end position="74"/>
    </location>
</feature>
<evidence type="ECO:0000255" key="1">
    <source>
        <dbReference type="HAMAP-Rule" id="MF_01863"/>
    </source>
</evidence>
<evidence type="ECO:0000305" key="2"/>
<comment type="similarity">
    <text evidence="1">Belongs to the UPF0741 family.</text>
</comment>
<comment type="sequence caution" evidence="2">
    <conflict type="erroneous initiation">
        <sequence resource="EMBL-CDS" id="AAT63009"/>
    </conflict>
</comment>
<sequence length="74" mass="8132">MGNEFRVCDDCQATNVKTLIPKLKKVDSCATIEVGCQSYCGPGRKKSFAFVNNRPVAAPTEDELIVKIEAKLNK</sequence>
<organism>
    <name type="scientific">Bacillus thuringiensis subsp. konkukian (strain 97-27)</name>
    <dbReference type="NCBI Taxonomy" id="281309"/>
    <lineage>
        <taxon>Bacteria</taxon>
        <taxon>Bacillati</taxon>
        <taxon>Bacillota</taxon>
        <taxon>Bacilli</taxon>
        <taxon>Bacillales</taxon>
        <taxon>Bacillaceae</taxon>
        <taxon>Bacillus</taxon>
        <taxon>Bacillus cereus group</taxon>
    </lineage>
</organism>
<accession>Q6HAQ2</accession>
<name>Y5064_BACHK</name>
<gene>
    <name type="ordered locus">BT9727_5064</name>
</gene>
<proteinExistence type="inferred from homology"/>
<protein>
    <recommendedName>
        <fullName evidence="1">UPF0741 protein BT9727_5064</fullName>
    </recommendedName>
</protein>
<dbReference type="EMBL" id="AE017355">
    <property type="protein sequence ID" value="AAT63009.1"/>
    <property type="status" value="ALT_INIT"/>
    <property type="molecule type" value="Genomic_DNA"/>
</dbReference>
<dbReference type="RefSeq" id="WP_000526077.1">
    <property type="nucleotide sequence ID" value="NC_005957.1"/>
</dbReference>
<dbReference type="RefSeq" id="YP_039374.1">
    <property type="nucleotide sequence ID" value="NC_005957.1"/>
</dbReference>
<dbReference type="SMR" id="Q6HAQ2"/>
<dbReference type="KEGG" id="btk:BT9727_5064"/>
<dbReference type="PATRIC" id="fig|281309.8.peg.5388"/>
<dbReference type="HOGENOM" id="CLU_163820_1_0_9"/>
<dbReference type="Proteomes" id="UP000001301">
    <property type="component" value="Chromosome"/>
</dbReference>
<dbReference type="HAMAP" id="MF_01863">
    <property type="entry name" value="UPF0741"/>
    <property type="match status" value="1"/>
</dbReference>
<dbReference type="InterPro" id="IPR009910">
    <property type="entry name" value="DUF1450"/>
</dbReference>
<dbReference type="InterPro" id="IPR020880">
    <property type="entry name" value="UPF0741"/>
</dbReference>
<dbReference type="Pfam" id="PF07293">
    <property type="entry name" value="DUF1450"/>
    <property type="match status" value="1"/>
</dbReference>
<reference key="1">
    <citation type="journal article" date="2006" name="J. Bacteriol.">
        <title>Pathogenomic sequence analysis of Bacillus cereus and Bacillus thuringiensis isolates closely related to Bacillus anthracis.</title>
        <authorList>
            <person name="Han C.S."/>
            <person name="Xie G."/>
            <person name="Challacombe J.F."/>
            <person name="Altherr M.R."/>
            <person name="Bhotika S.S."/>
            <person name="Bruce D."/>
            <person name="Campbell C.S."/>
            <person name="Campbell M.L."/>
            <person name="Chen J."/>
            <person name="Chertkov O."/>
            <person name="Cleland C."/>
            <person name="Dimitrijevic M."/>
            <person name="Doggett N.A."/>
            <person name="Fawcett J.J."/>
            <person name="Glavina T."/>
            <person name="Goodwin L.A."/>
            <person name="Hill K.K."/>
            <person name="Hitchcock P."/>
            <person name="Jackson P.J."/>
            <person name="Keim P."/>
            <person name="Kewalramani A.R."/>
            <person name="Longmire J."/>
            <person name="Lucas S."/>
            <person name="Malfatti S."/>
            <person name="McMurry K."/>
            <person name="Meincke L.J."/>
            <person name="Misra M."/>
            <person name="Moseman B.L."/>
            <person name="Mundt M."/>
            <person name="Munk A.C."/>
            <person name="Okinaka R.T."/>
            <person name="Parson-Quintana B."/>
            <person name="Reilly L.P."/>
            <person name="Richardson P."/>
            <person name="Robinson D.L."/>
            <person name="Rubin E."/>
            <person name="Saunders E."/>
            <person name="Tapia R."/>
            <person name="Tesmer J.G."/>
            <person name="Thayer N."/>
            <person name="Thompson L.S."/>
            <person name="Tice H."/>
            <person name="Ticknor L.O."/>
            <person name="Wills P.L."/>
            <person name="Brettin T.S."/>
            <person name="Gilna P."/>
        </authorList>
    </citation>
    <scope>NUCLEOTIDE SEQUENCE [LARGE SCALE GENOMIC DNA]</scope>
    <source>
        <strain>97-27</strain>
    </source>
</reference>